<dbReference type="EMBL" id="AP006716">
    <property type="protein sequence ID" value="BAE05328.1"/>
    <property type="molecule type" value="Genomic_DNA"/>
</dbReference>
<dbReference type="RefSeq" id="WP_011276285.1">
    <property type="nucleotide sequence ID" value="NC_007168.1"/>
</dbReference>
<dbReference type="SMR" id="Q4L4U7"/>
<dbReference type="GeneID" id="93781377"/>
<dbReference type="KEGG" id="sha:SH2019"/>
<dbReference type="eggNOG" id="COG0236">
    <property type="taxonomic scope" value="Bacteria"/>
</dbReference>
<dbReference type="HOGENOM" id="CLU_108696_19_0_9"/>
<dbReference type="OrthoDB" id="6462171at2"/>
<dbReference type="UniPathway" id="UPA00556"/>
<dbReference type="Proteomes" id="UP000000543">
    <property type="component" value="Chromosome"/>
</dbReference>
<dbReference type="GO" id="GO:0005737">
    <property type="term" value="C:cytoplasm"/>
    <property type="evidence" value="ECO:0007669"/>
    <property type="project" value="UniProtKB-SubCell"/>
</dbReference>
<dbReference type="GO" id="GO:0036370">
    <property type="term" value="F:D-alanyl carrier activity"/>
    <property type="evidence" value="ECO:0007669"/>
    <property type="project" value="UniProtKB-UniRule"/>
</dbReference>
<dbReference type="GO" id="GO:0071555">
    <property type="term" value="P:cell wall organization"/>
    <property type="evidence" value="ECO:0007669"/>
    <property type="project" value="UniProtKB-KW"/>
</dbReference>
<dbReference type="GO" id="GO:0070395">
    <property type="term" value="P:lipoteichoic acid biosynthetic process"/>
    <property type="evidence" value="ECO:0007669"/>
    <property type="project" value="UniProtKB-UniRule"/>
</dbReference>
<dbReference type="Gene3D" id="1.10.1200.10">
    <property type="entry name" value="ACP-like"/>
    <property type="match status" value="1"/>
</dbReference>
<dbReference type="HAMAP" id="MF_00565">
    <property type="entry name" value="DltC"/>
    <property type="match status" value="1"/>
</dbReference>
<dbReference type="InterPro" id="IPR036736">
    <property type="entry name" value="ACP-like_sf"/>
</dbReference>
<dbReference type="InterPro" id="IPR003230">
    <property type="entry name" value="DltC"/>
</dbReference>
<dbReference type="InterPro" id="IPR009081">
    <property type="entry name" value="PP-bd_ACP"/>
</dbReference>
<dbReference type="NCBIfam" id="TIGR01688">
    <property type="entry name" value="dltC"/>
    <property type="match status" value="1"/>
</dbReference>
<dbReference type="NCBIfam" id="NF003464">
    <property type="entry name" value="PRK05087.1"/>
    <property type="match status" value="1"/>
</dbReference>
<dbReference type="Pfam" id="PF00550">
    <property type="entry name" value="PP-binding"/>
    <property type="match status" value="1"/>
</dbReference>
<dbReference type="SUPFAM" id="SSF47336">
    <property type="entry name" value="ACP-like"/>
    <property type="match status" value="1"/>
</dbReference>
<dbReference type="PROSITE" id="PS50075">
    <property type="entry name" value="CARRIER"/>
    <property type="match status" value="1"/>
</dbReference>
<feature type="chain" id="PRO_0000213106" description="D-alanyl carrier protein">
    <location>
        <begin position="1"/>
        <end position="78"/>
    </location>
</feature>
<feature type="domain" description="Carrier" evidence="1">
    <location>
        <begin position="1"/>
        <end position="78"/>
    </location>
</feature>
<feature type="modified residue" description="O-(pantetheine 4'-phosphoryl)serine" evidence="1">
    <location>
        <position position="36"/>
    </location>
</feature>
<organism>
    <name type="scientific">Staphylococcus haemolyticus (strain JCSC1435)</name>
    <dbReference type="NCBI Taxonomy" id="279808"/>
    <lineage>
        <taxon>Bacteria</taxon>
        <taxon>Bacillati</taxon>
        <taxon>Bacillota</taxon>
        <taxon>Bacilli</taxon>
        <taxon>Bacillales</taxon>
        <taxon>Staphylococcaceae</taxon>
        <taxon>Staphylococcus</taxon>
    </lineage>
</organism>
<sequence>MEFKEQVLDLLADVAENDVVKENPDVEIFEEGIIDSFQTVGLLLEIQNRLGIEVSIMDFDRDEWATPNKIVEALEELR</sequence>
<evidence type="ECO:0000255" key="1">
    <source>
        <dbReference type="HAMAP-Rule" id="MF_00565"/>
    </source>
</evidence>
<gene>
    <name evidence="1" type="primary">dltC</name>
    <name type="ordered locus">SH2019</name>
</gene>
<reference key="1">
    <citation type="journal article" date="2005" name="J. Bacteriol.">
        <title>Whole-genome sequencing of Staphylococcus haemolyticus uncovers the extreme plasticity of its genome and the evolution of human-colonizing staphylococcal species.</title>
        <authorList>
            <person name="Takeuchi F."/>
            <person name="Watanabe S."/>
            <person name="Baba T."/>
            <person name="Yuzawa H."/>
            <person name="Ito T."/>
            <person name="Morimoto Y."/>
            <person name="Kuroda M."/>
            <person name="Cui L."/>
            <person name="Takahashi M."/>
            <person name="Ankai A."/>
            <person name="Baba S."/>
            <person name="Fukui S."/>
            <person name="Lee J.C."/>
            <person name="Hiramatsu K."/>
        </authorList>
    </citation>
    <scope>NUCLEOTIDE SEQUENCE [LARGE SCALE GENOMIC DNA]</scope>
    <source>
        <strain>JCSC1435</strain>
    </source>
</reference>
<comment type="function">
    <text evidence="1">Carrier protein involved in the D-alanylation of lipoteichoic acid (LTA). The loading of thioester-linked D-alanine onto DltC is catalyzed by D-alanine--D-alanyl carrier protein ligase DltA. The DltC-carried D-alanyl group is further transferred to cell membrane phosphatidylglycerol (PG) by forming an ester bond, probably catalyzed by DltD. D-alanylation of LTA plays an important role in modulating the properties of the cell wall in Gram-positive bacteria, influencing the net charge of the cell wall.</text>
</comment>
<comment type="pathway">
    <text evidence="1">Cell wall biogenesis; lipoteichoic acid biosynthesis.</text>
</comment>
<comment type="subcellular location">
    <subcellularLocation>
        <location evidence="1">Cytoplasm</location>
    </subcellularLocation>
</comment>
<comment type="PTM">
    <text evidence="1">4'-phosphopantetheine is transferred from CoA to a specific serine of apo-DCP.</text>
</comment>
<comment type="similarity">
    <text evidence="1">Belongs to the DltC family.</text>
</comment>
<protein>
    <recommendedName>
        <fullName evidence="1">D-alanyl carrier protein</fullName>
        <shortName evidence="1">DCP</shortName>
    </recommendedName>
    <alternativeName>
        <fullName evidence="1">D-alanine--poly(phosphoribitol) ligase subunit 2</fullName>
    </alternativeName>
</protein>
<name>DLTC_STAHJ</name>
<accession>Q4L4U7</accession>
<keyword id="KW-0961">Cell wall biogenesis/degradation</keyword>
<keyword id="KW-0963">Cytoplasm</keyword>
<keyword id="KW-0596">Phosphopantetheine</keyword>
<keyword id="KW-0597">Phosphoprotein</keyword>
<proteinExistence type="inferred from homology"/>